<proteinExistence type="inferred from homology"/>
<protein>
    <recommendedName>
        <fullName evidence="1">DNA replication and repair protein RecF</fullName>
    </recommendedName>
</protein>
<feature type="chain" id="PRO_0000236144" description="DNA replication and repair protein RecF">
    <location>
        <begin position="1"/>
        <end position="357"/>
    </location>
</feature>
<feature type="binding site" evidence="1">
    <location>
        <begin position="30"/>
        <end position="37"/>
    </location>
    <ligand>
        <name>ATP</name>
        <dbReference type="ChEBI" id="CHEBI:30616"/>
    </ligand>
</feature>
<organism>
    <name type="scientific">Shigella dysenteriae serotype 1 (strain Sd197)</name>
    <dbReference type="NCBI Taxonomy" id="300267"/>
    <lineage>
        <taxon>Bacteria</taxon>
        <taxon>Pseudomonadati</taxon>
        <taxon>Pseudomonadota</taxon>
        <taxon>Gammaproteobacteria</taxon>
        <taxon>Enterobacterales</taxon>
        <taxon>Enterobacteriaceae</taxon>
        <taxon>Shigella</taxon>
    </lineage>
</organism>
<gene>
    <name evidence="1" type="primary">recF</name>
    <name type="ordered locus">SDY_4182</name>
</gene>
<sequence>MSLTRLLIRDFRNIETADLALSPGFNFLVGANGSGKTSMLEAIYTLGHGRAFRSLQIGRVIRHEQEAFVLHGRLQGEERETAIGLTKDKQGDSKVRIDGTDGHKVAELAHLMPMQLITPEGFTLLNGGPKYRRAFLDWGCFHNESGFFTAWSNLKRLLKQRNAALRQVTRYEQLRPWDKELILLAEQISTWRAEYSAGIAADMADTCKQFLPEFSLTFSFQRGWEKETEYAEVLERNFERDRQLTYTAHGPHKADLRIRADGAPVEDTLSRGQLKLLMCALRLAQGEFLTRESGRRCLYLIDDFASELDDERRGLLASRLKATQSQVFVSAISAEHVIDMSDENSKMFTVEKGKITD</sequence>
<name>RECF_SHIDS</name>
<reference key="1">
    <citation type="journal article" date="2005" name="Nucleic Acids Res.">
        <title>Genome dynamics and diversity of Shigella species, the etiologic agents of bacillary dysentery.</title>
        <authorList>
            <person name="Yang F."/>
            <person name="Yang J."/>
            <person name="Zhang X."/>
            <person name="Chen L."/>
            <person name="Jiang Y."/>
            <person name="Yan Y."/>
            <person name="Tang X."/>
            <person name="Wang J."/>
            <person name="Xiong Z."/>
            <person name="Dong J."/>
            <person name="Xue Y."/>
            <person name="Zhu Y."/>
            <person name="Xu X."/>
            <person name="Sun L."/>
            <person name="Chen S."/>
            <person name="Nie H."/>
            <person name="Peng J."/>
            <person name="Xu J."/>
            <person name="Wang Y."/>
            <person name="Yuan Z."/>
            <person name="Wen Y."/>
            <person name="Yao Z."/>
            <person name="Shen Y."/>
            <person name="Qiang B."/>
            <person name="Hou Y."/>
            <person name="Yu J."/>
            <person name="Jin Q."/>
        </authorList>
    </citation>
    <scope>NUCLEOTIDE SEQUENCE [LARGE SCALE GENOMIC DNA]</scope>
    <source>
        <strain>Sd197</strain>
    </source>
</reference>
<comment type="function">
    <text evidence="1">The RecF protein is involved in DNA metabolism; it is required for DNA replication and normal SOS inducibility. RecF binds preferentially to single-stranded, linear DNA. It also seems to bind ATP.</text>
</comment>
<comment type="subcellular location">
    <subcellularLocation>
        <location evidence="1">Cytoplasm</location>
    </subcellularLocation>
</comment>
<comment type="similarity">
    <text evidence="1">Belongs to the RecF family.</text>
</comment>
<evidence type="ECO:0000255" key="1">
    <source>
        <dbReference type="HAMAP-Rule" id="MF_00365"/>
    </source>
</evidence>
<accession>Q329B8</accession>
<keyword id="KW-0067">ATP-binding</keyword>
<keyword id="KW-0963">Cytoplasm</keyword>
<keyword id="KW-0227">DNA damage</keyword>
<keyword id="KW-0234">DNA repair</keyword>
<keyword id="KW-0235">DNA replication</keyword>
<keyword id="KW-0238">DNA-binding</keyword>
<keyword id="KW-0547">Nucleotide-binding</keyword>
<keyword id="KW-1185">Reference proteome</keyword>
<keyword id="KW-0742">SOS response</keyword>
<dbReference type="EMBL" id="CP000034">
    <property type="protein sequence ID" value="ABB64087.1"/>
    <property type="molecule type" value="Genomic_DNA"/>
</dbReference>
<dbReference type="RefSeq" id="WP_000060093.1">
    <property type="nucleotide sequence ID" value="NC_007606.1"/>
</dbReference>
<dbReference type="RefSeq" id="YP_405578.1">
    <property type="nucleotide sequence ID" value="NC_007606.1"/>
</dbReference>
<dbReference type="SMR" id="Q329B8"/>
<dbReference type="STRING" id="300267.SDY_4182"/>
<dbReference type="EnsemblBacteria" id="ABB64087">
    <property type="protein sequence ID" value="ABB64087"/>
    <property type="gene ID" value="SDY_4182"/>
</dbReference>
<dbReference type="KEGG" id="sdy:SDY_4182"/>
<dbReference type="PATRIC" id="fig|300267.13.peg.4920"/>
<dbReference type="HOGENOM" id="CLU_040267_0_0_6"/>
<dbReference type="Proteomes" id="UP000002716">
    <property type="component" value="Chromosome"/>
</dbReference>
<dbReference type="GO" id="GO:0005737">
    <property type="term" value="C:cytoplasm"/>
    <property type="evidence" value="ECO:0007669"/>
    <property type="project" value="UniProtKB-SubCell"/>
</dbReference>
<dbReference type="GO" id="GO:0005524">
    <property type="term" value="F:ATP binding"/>
    <property type="evidence" value="ECO:0007669"/>
    <property type="project" value="UniProtKB-UniRule"/>
</dbReference>
<dbReference type="GO" id="GO:0003697">
    <property type="term" value="F:single-stranded DNA binding"/>
    <property type="evidence" value="ECO:0007669"/>
    <property type="project" value="UniProtKB-UniRule"/>
</dbReference>
<dbReference type="GO" id="GO:0006260">
    <property type="term" value="P:DNA replication"/>
    <property type="evidence" value="ECO:0007669"/>
    <property type="project" value="UniProtKB-UniRule"/>
</dbReference>
<dbReference type="GO" id="GO:0000731">
    <property type="term" value="P:DNA synthesis involved in DNA repair"/>
    <property type="evidence" value="ECO:0007669"/>
    <property type="project" value="TreeGrafter"/>
</dbReference>
<dbReference type="GO" id="GO:0006302">
    <property type="term" value="P:double-strand break repair"/>
    <property type="evidence" value="ECO:0007669"/>
    <property type="project" value="TreeGrafter"/>
</dbReference>
<dbReference type="GO" id="GO:0009432">
    <property type="term" value="P:SOS response"/>
    <property type="evidence" value="ECO:0007669"/>
    <property type="project" value="UniProtKB-UniRule"/>
</dbReference>
<dbReference type="FunFam" id="1.20.1050.90:FF:000001">
    <property type="entry name" value="DNA replication and repair protein RecF"/>
    <property type="match status" value="1"/>
</dbReference>
<dbReference type="Gene3D" id="3.40.50.300">
    <property type="entry name" value="P-loop containing nucleotide triphosphate hydrolases"/>
    <property type="match status" value="1"/>
</dbReference>
<dbReference type="Gene3D" id="1.20.1050.90">
    <property type="entry name" value="RecF/RecN/SMC, N-terminal domain"/>
    <property type="match status" value="1"/>
</dbReference>
<dbReference type="HAMAP" id="MF_00365">
    <property type="entry name" value="RecF"/>
    <property type="match status" value="1"/>
</dbReference>
<dbReference type="InterPro" id="IPR001238">
    <property type="entry name" value="DNA-binding_RecF"/>
</dbReference>
<dbReference type="InterPro" id="IPR018078">
    <property type="entry name" value="DNA-binding_RecF_CS"/>
</dbReference>
<dbReference type="InterPro" id="IPR027417">
    <property type="entry name" value="P-loop_NTPase"/>
</dbReference>
<dbReference type="InterPro" id="IPR003395">
    <property type="entry name" value="RecF/RecN/SMC_N"/>
</dbReference>
<dbReference type="InterPro" id="IPR042174">
    <property type="entry name" value="RecF_2"/>
</dbReference>
<dbReference type="NCBIfam" id="TIGR00611">
    <property type="entry name" value="recf"/>
    <property type="match status" value="1"/>
</dbReference>
<dbReference type="PANTHER" id="PTHR32182">
    <property type="entry name" value="DNA REPLICATION AND REPAIR PROTEIN RECF"/>
    <property type="match status" value="1"/>
</dbReference>
<dbReference type="PANTHER" id="PTHR32182:SF0">
    <property type="entry name" value="DNA REPLICATION AND REPAIR PROTEIN RECF"/>
    <property type="match status" value="1"/>
</dbReference>
<dbReference type="Pfam" id="PF02463">
    <property type="entry name" value="SMC_N"/>
    <property type="match status" value="1"/>
</dbReference>
<dbReference type="SUPFAM" id="SSF52540">
    <property type="entry name" value="P-loop containing nucleoside triphosphate hydrolases"/>
    <property type="match status" value="1"/>
</dbReference>
<dbReference type="PROSITE" id="PS00617">
    <property type="entry name" value="RECF_1"/>
    <property type="match status" value="1"/>
</dbReference>
<dbReference type="PROSITE" id="PS00618">
    <property type="entry name" value="RECF_2"/>
    <property type="match status" value="1"/>
</dbReference>